<accession>Q2FDM8</accession>
<organism>
    <name type="scientific">Staphylococcus aureus (strain USA300)</name>
    <dbReference type="NCBI Taxonomy" id="367830"/>
    <lineage>
        <taxon>Bacteria</taxon>
        <taxon>Bacillati</taxon>
        <taxon>Bacillota</taxon>
        <taxon>Bacilli</taxon>
        <taxon>Bacillales</taxon>
        <taxon>Staphylococcaceae</taxon>
        <taxon>Staphylococcus</taxon>
    </lineage>
</organism>
<evidence type="ECO:0000250" key="1"/>
<feature type="chain" id="PRO_0000349417" description="HTH-type transcriptional regulator ArcR">
    <location>
        <begin position="1"/>
        <end position="234"/>
    </location>
</feature>
<feature type="domain" description="HTH crp-type">
    <location>
        <begin position="155"/>
        <end position="228"/>
    </location>
</feature>
<feature type="DNA-binding region" description="H-T-H motif" evidence="1">
    <location>
        <begin position="188"/>
        <end position="207"/>
    </location>
</feature>
<feature type="binding site">
    <location>
        <begin position="40"/>
        <end position="129"/>
    </location>
    <ligand>
        <name>a nucleoside 3',5'-cyclic phosphate</name>
        <dbReference type="ChEBI" id="CHEBI:58464"/>
    </ligand>
</feature>
<name>ARCR_STAA3</name>
<dbReference type="EMBL" id="CP000255">
    <property type="protein sequence ID" value="ABD22163.1"/>
    <property type="molecule type" value="Genomic_DNA"/>
</dbReference>
<dbReference type="RefSeq" id="WP_000138214.1">
    <property type="nucleotide sequence ID" value="NZ_CP027476.1"/>
</dbReference>
<dbReference type="SMR" id="Q2FDM8"/>
<dbReference type="KEGG" id="saa:SAUSA300_2566"/>
<dbReference type="HOGENOM" id="CLU_1160528_0_0_9"/>
<dbReference type="OMA" id="EYLCKNH"/>
<dbReference type="Proteomes" id="UP000001939">
    <property type="component" value="Chromosome"/>
</dbReference>
<dbReference type="GO" id="GO:0005737">
    <property type="term" value="C:cytoplasm"/>
    <property type="evidence" value="ECO:0007669"/>
    <property type="project" value="UniProtKB-SubCell"/>
</dbReference>
<dbReference type="GO" id="GO:0030552">
    <property type="term" value="F:cAMP binding"/>
    <property type="evidence" value="ECO:0007669"/>
    <property type="project" value="UniProtKB-KW"/>
</dbReference>
<dbReference type="GO" id="GO:0003677">
    <property type="term" value="F:DNA binding"/>
    <property type="evidence" value="ECO:0007669"/>
    <property type="project" value="UniProtKB-KW"/>
</dbReference>
<dbReference type="GO" id="GO:0006355">
    <property type="term" value="P:regulation of DNA-templated transcription"/>
    <property type="evidence" value="ECO:0007669"/>
    <property type="project" value="InterPro"/>
</dbReference>
<dbReference type="Gene3D" id="2.60.120.10">
    <property type="entry name" value="Jelly Rolls"/>
    <property type="match status" value="1"/>
</dbReference>
<dbReference type="Gene3D" id="1.10.10.10">
    <property type="entry name" value="Winged helix-like DNA-binding domain superfamily/Winged helix DNA-binding domain"/>
    <property type="match status" value="1"/>
</dbReference>
<dbReference type="InterPro" id="IPR000595">
    <property type="entry name" value="cNMP-bd_dom"/>
</dbReference>
<dbReference type="InterPro" id="IPR018490">
    <property type="entry name" value="cNMP-bd_dom_sf"/>
</dbReference>
<dbReference type="InterPro" id="IPR012318">
    <property type="entry name" value="HTH_CRP"/>
</dbReference>
<dbReference type="InterPro" id="IPR014710">
    <property type="entry name" value="RmlC-like_jellyroll"/>
</dbReference>
<dbReference type="InterPro" id="IPR036388">
    <property type="entry name" value="WH-like_DNA-bd_sf"/>
</dbReference>
<dbReference type="InterPro" id="IPR036390">
    <property type="entry name" value="WH_DNA-bd_sf"/>
</dbReference>
<dbReference type="Pfam" id="PF00027">
    <property type="entry name" value="cNMP_binding"/>
    <property type="match status" value="1"/>
</dbReference>
<dbReference type="Pfam" id="PF13545">
    <property type="entry name" value="HTH_Crp_2"/>
    <property type="match status" value="1"/>
</dbReference>
<dbReference type="SUPFAM" id="SSF51206">
    <property type="entry name" value="cAMP-binding domain-like"/>
    <property type="match status" value="1"/>
</dbReference>
<dbReference type="SUPFAM" id="SSF46785">
    <property type="entry name" value="Winged helix' DNA-binding domain"/>
    <property type="match status" value="1"/>
</dbReference>
<proteinExistence type="inferred from homology"/>
<gene>
    <name type="primary">arcR</name>
    <name type="ordered locus">SAUSA300_2566</name>
</gene>
<reference key="1">
    <citation type="journal article" date="2006" name="Lancet">
        <title>Complete genome sequence of USA300, an epidemic clone of community-acquired meticillin-resistant Staphylococcus aureus.</title>
        <authorList>
            <person name="Diep B.A."/>
            <person name="Gill S.R."/>
            <person name="Chang R.F."/>
            <person name="Phan T.H."/>
            <person name="Chen J.H."/>
            <person name="Davidson M.G."/>
            <person name="Lin F."/>
            <person name="Lin J."/>
            <person name="Carleton H.A."/>
            <person name="Mongodin E.F."/>
            <person name="Sensabaugh G.F."/>
            <person name="Perdreau-Remington F."/>
        </authorList>
    </citation>
    <scope>NUCLEOTIDE SEQUENCE [LARGE SCALE GENOMIC DNA]</scope>
    <source>
        <strain>USA300</strain>
    </source>
</reference>
<keyword id="KW-0010">Activator</keyword>
<keyword id="KW-0114">cAMP</keyword>
<keyword id="KW-0116">cAMP-binding</keyword>
<keyword id="KW-0963">Cytoplasm</keyword>
<keyword id="KW-0238">DNA-binding</keyword>
<keyword id="KW-0547">Nucleotide-binding</keyword>
<keyword id="KW-0804">Transcription</keyword>
<keyword id="KW-0805">Transcription regulation</keyword>
<comment type="function">
    <text evidence="1">Positively regulates the expression of the arcABDCR operon under anaerobic conditions, thus playing an essential role in arginine catabolism. May also control the expression of genes encoding proteins which are involved in anaerobic metabolism. Can bind cyclic AMP (By similarity).</text>
</comment>
<comment type="subcellular location">
    <subcellularLocation>
        <location evidence="1">Cytoplasm</location>
    </subcellularLocation>
</comment>
<sequence length="234" mass="27428">MTENFILGRNNKLEHELKALADYINIPYSILQPYQSECFVRHYTKGQVIYFSPQESSNIYFLIEGNIIREHYNQNGDVYRYFNKEQVLFPISNLFHPKEVNELCTALTDCTVLGLPRELMAFLCKANDDIFLTLFALINDNEQQHMNYNMALTSKFAKDRIIKLICHLCQTVGYDQDEFYEIKQFLTIQLMSDMAGISRETAGHIIHELKDEKLVVKDHKNWLVSKHLFNDVCV</sequence>
<protein>
    <recommendedName>
        <fullName>HTH-type transcriptional regulator ArcR</fullName>
    </recommendedName>
</protein>